<sequence length="174" mass="19425">MSIVHLQSVEILNAEASFKDPYVFKITFECISPLQDDLEWRLVYVGSAGDEKYDQELDTCMVGPVPVGVNSFEFEAAAPSPSKIPPEDLLGVTVILLTASYRDQEFIRVGYYVNNAYESEELRENPPEKVDLTQVRREVLVSKPRVTRFNIKWDDSATASASTQQQGSAEGLTA</sequence>
<dbReference type="EMBL" id="CM003144">
    <property type="protein sequence ID" value="KIS69901.1"/>
    <property type="molecule type" value="Genomic_DNA"/>
</dbReference>
<dbReference type="RefSeq" id="XP_011388708.1">
    <property type="nucleotide sequence ID" value="XM_011390406.1"/>
</dbReference>
<dbReference type="SMR" id="Q4PBU8"/>
<dbReference type="FunCoup" id="Q4PBU8">
    <property type="interactions" value="448"/>
</dbReference>
<dbReference type="STRING" id="237631.Q4PBU8"/>
<dbReference type="EnsemblFungi" id="KIS69901">
    <property type="protein sequence ID" value="KIS69901"/>
    <property type="gene ID" value="UMAG_02415"/>
</dbReference>
<dbReference type="GeneID" id="23563166"/>
<dbReference type="KEGG" id="uma:UMAG_02415"/>
<dbReference type="VEuPathDB" id="FungiDB:UMAG_02415"/>
<dbReference type="eggNOG" id="KOG3265">
    <property type="taxonomic scope" value="Eukaryota"/>
</dbReference>
<dbReference type="HOGENOM" id="CLU_060354_1_2_1"/>
<dbReference type="InParanoid" id="Q4PBU8"/>
<dbReference type="OMA" id="DYADQEM"/>
<dbReference type="OrthoDB" id="29755at2759"/>
<dbReference type="Proteomes" id="UP000000561">
    <property type="component" value="Chromosome 5"/>
</dbReference>
<dbReference type="GO" id="GO:0000785">
    <property type="term" value="C:chromatin"/>
    <property type="evidence" value="ECO:0000318"/>
    <property type="project" value="GO_Central"/>
</dbReference>
<dbReference type="GO" id="GO:0000781">
    <property type="term" value="C:chromosome, telomeric region"/>
    <property type="evidence" value="ECO:0007669"/>
    <property type="project" value="GOC"/>
</dbReference>
<dbReference type="GO" id="GO:0005829">
    <property type="term" value="C:cytosol"/>
    <property type="evidence" value="ECO:0007669"/>
    <property type="project" value="EnsemblFungi"/>
</dbReference>
<dbReference type="GO" id="GO:0070775">
    <property type="term" value="C:H3 histone acetyltransferase complex"/>
    <property type="evidence" value="ECO:0007669"/>
    <property type="project" value="EnsemblFungi"/>
</dbReference>
<dbReference type="GO" id="GO:0005634">
    <property type="term" value="C:nucleus"/>
    <property type="evidence" value="ECO:0000318"/>
    <property type="project" value="GO_Central"/>
</dbReference>
<dbReference type="GO" id="GO:0010698">
    <property type="term" value="F:acetyltransferase activator activity"/>
    <property type="evidence" value="ECO:0007669"/>
    <property type="project" value="EnsemblFungi"/>
</dbReference>
<dbReference type="GO" id="GO:0042393">
    <property type="term" value="F:histone binding"/>
    <property type="evidence" value="ECO:0000318"/>
    <property type="project" value="GO_Central"/>
</dbReference>
<dbReference type="GO" id="GO:0033554">
    <property type="term" value="P:cellular response to stress"/>
    <property type="evidence" value="ECO:0007669"/>
    <property type="project" value="EnsemblFungi"/>
</dbReference>
<dbReference type="GO" id="GO:0006335">
    <property type="term" value="P:DNA replication-dependent chromatin assembly"/>
    <property type="evidence" value="ECO:0000318"/>
    <property type="project" value="GO_Central"/>
</dbReference>
<dbReference type="GO" id="GO:0006337">
    <property type="term" value="P:nucleosome disassembly"/>
    <property type="evidence" value="ECO:0007669"/>
    <property type="project" value="EnsemblFungi"/>
</dbReference>
<dbReference type="GO" id="GO:0032968">
    <property type="term" value="P:positive regulation of transcription elongation by RNA polymerase II"/>
    <property type="evidence" value="ECO:0007669"/>
    <property type="project" value="EnsemblFungi"/>
</dbReference>
<dbReference type="GO" id="GO:0036211">
    <property type="term" value="P:protein modification process"/>
    <property type="evidence" value="ECO:0007669"/>
    <property type="project" value="EnsemblFungi"/>
</dbReference>
<dbReference type="GO" id="GO:0030466">
    <property type="term" value="P:silent mating-type cassette heterochromatin formation"/>
    <property type="evidence" value="ECO:0007669"/>
    <property type="project" value="EnsemblFungi"/>
</dbReference>
<dbReference type="GO" id="GO:0031509">
    <property type="term" value="P:subtelomeric heterochromatin formation"/>
    <property type="evidence" value="ECO:0007669"/>
    <property type="project" value="EnsemblFungi"/>
</dbReference>
<dbReference type="Gene3D" id="2.60.40.1490">
    <property type="entry name" value="Histone chaperone ASF1-like"/>
    <property type="match status" value="1"/>
</dbReference>
<dbReference type="InterPro" id="IPR006818">
    <property type="entry name" value="ASF1-like"/>
</dbReference>
<dbReference type="InterPro" id="IPR036747">
    <property type="entry name" value="ASF1-like_sf"/>
</dbReference>
<dbReference type="PANTHER" id="PTHR12040">
    <property type="entry name" value="ANTI-SILENCING PROTEIN 1"/>
    <property type="match status" value="1"/>
</dbReference>
<dbReference type="PANTHER" id="PTHR12040:SF0">
    <property type="entry name" value="HISTONE CHAPERONE ASF1"/>
    <property type="match status" value="1"/>
</dbReference>
<dbReference type="Pfam" id="PF04729">
    <property type="entry name" value="ASF1_hist_chap"/>
    <property type="match status" value="1"/>
</dbReference>
<dbReference type="SUPFAM" id="SSF101546">
    <property type="entry name" value="ASF1-like"/>
    <property type="match status" value="1"/>
</dbReference>
<proteinExistence type="inferred from homology"/>
<organism>
    <name type="scientific">Mycosarcoma maydis</name>
    <name type="common">Corn smut fungus</name>
    <name type="synonym">Ustilago maydis</name>
    <dbReference type="NCBI Taxonomy" id="5270"/>
    <lineage>
        <taxon>Eukaryota</taxon>
        <taxon>Fungi</taxon>
        <taxon>Dikarya</taxon>
        <taxon>Basidiomycota</taxon>
        <taxon>Ustilaginomycotina</taxon>
        <taxon>Ustilaginomycetes</taxon>
        <taxon>Ustilaginales</taxon>
        <taxon>Ustilaginaceae</taxon>
        <taxon>Mycosarcoma</taxon>
    </lineage>
</organism>
<evidence type="ECO:0000250" key="1"/>
<evidence type="ECO:0000256" key="2">
    <source>
        <dbReference type="SAM" id="MobiDB-lite"/>
    </source>
</evidence>
<evidence type="ECO:0000305" key="3"/>
<name>ASF1_MYCMD</name>
<feature type="chain" id="PRO_0000284040" description="Histone chaperone ASF1">
    <location>
        <begin position="1"/>
        <end position="174"/>
    </location>
</feature>
<feature type="region of interest" description="Disordered" evidence="2">
    <location>
        <begin position="155"/>
        <end position="174"/>
    </location>
</feature>
<feature type="compositionally biased region" description="Polar residues" evidence="2">
    <location>
        <begin position="157"/>
        <end position="168"/>
    </location>
</feature>
<protein>
    <recommendedName>
        <fullName>Histone chaperone ASF1</fullName>
    </recommendedName>
    <alternativeName>
        <fullName>Anti-silencing function protein 1</fullName>
    </alternativeName>
</protein>
<gene>
    <name type="primary">ASF1</name>
    <name type="ORF">UMAG_02415</name>
</gene>
<reference key="1">
    <citation type="journal article" date="2006" name="Nature">
        <title>Insights from the genome of the biotrophic fungal plant pathogen Ustilago maydis.</title>
        <authorList>
            <person name="Kaemper J."/>
            <person name="Kahmann R."/>
            <person name="Boelker M."/>
            <person name="Ma L.-J."/>
            <person name="Brefort T."/>
            <person name="Saville B.J."/>
            <person name="Banuett F."/>
            <person name="Kronstad J.W."/>
            <person name="Gold S.E."/>
            <person name="Mueller O."/>
            <person name="Perlin M.H."/>
            <person name="Woesten H.A.B."/>
            <person name="de Vries R."/>
            <person name="Ruiz-Herrera J."/>
            <person name="Reynaga-Pena C.G."/>
            <person name="Snetselaar K."/>
            <person name="McCann M."/>
            <person name="Perez-Martin J."/>
            <person name="Feldbruegge M."/>
            <person name="Basse C.W."/>
            <person name="Steinberg G."/>
            <person name="Ibeas J.I."/>
            <person name="Holloman W."/>
            <person name="Guzman P."/>
            <person name="Farman M.L."/>
            <person name="Stajich J.E."/>
            <person name="Sentandreu R."/>
            <person name="Gonzalez-Prieto J.M."/>
            <person name="Kennell J.C."/>
            <person name="Molina L."/>
            <person name="Schirawski J."/>
            <person name="Mendoza-Mendoza A."/>
            <person name="Greilinger D."/>
            <person name="Muench K."/>
            <person name="Roessel N."/>
            <person name="Scherer M."/>
            <person name="Vranes M."/>
            <person name="Ladendorf O."/>
            <person name="Vincon V."/>
            <person name="Fuchs U."/>
            <person name="Sandrock B."/>
            <person name="Meng S."/>
            <person name="Ho E.C.H."/>
            <person name="Cahill M.J."/>
            <person name="Boyce K.J."/>
            <person name="Klose J."/>
            <person name="Klosterman S.J."/>
            <person name="Deelstra H.J."/>
            <person name="Ortiz-Castellanos L."/>
            <person name="Li W."/>
            <person name="Sanchez-Alonso P."/>
            <person name="Schreier P.H."/>
            <person name="Haeuser-Hahn I."/>
            <person name="Vaupel M."/>
            <person name="Koopmann E."/>
            <person name="Friedrich G."/>
            <person name="Voss H."/>
            <person name="Schlueter T."/>
            <person name="Margolis J."/>
            <person name="Platt D."/>
            <person name="Swimmer C."/>
            <person name="Gnirke A."/>
            <person name="Chen F."/>
            <person name="Vysotskaia V."/>
            <person name="Mannhaupt G."/>
            <person name="Gueldener U."/>
            <person name="Muensterkoetter M."/>
            <person name="Haase D."/>
            <person name="Oesterheld M."/>
            <person name="Mewes H.-W."/>
            <person name="Mauceli E.W."/>
            <person name="DeCaprio D."/>
            <person name="Wade C.M."/>
            <person name="Butler J."/>
            <person name="Young S.K."/>
            <person name="Jaffe D.B."/>
            <person name="Calvo S.E."/>
            <person name="Nusbaum C."/>
            <person name="Galagan J.E."/>
            <person name="Birren B.W."/>
        </authorList>
    </citation>
    <scope>NUCLEOTIDE SEQUENCE [LARGE SCALE GENOMIC DNA]</scope>
    <source>
        <strain>DSM 14603 / FGSC 9021 / UM521</strain>
    </source>
</reference>
<reference key="2">
    <citation type="submission" date="2014-09" db="EMBL/GenBank/DDBJ databases">
        <authorList>
            <person name="Gueldener U."/>
            <person name="Muensterkoetter M."/>
            <person name="Walter M.C."/>
            <person name="Mannhaupt G."/>
            <person name="Kahmann R."/>
        </authorList>
    </citation>
    <scope>GENOME REANNOTATION</scope>
    <source>
        <strain>DSM 14603 / FGSC 9021 / UM521</strain>
    </source>
</reference>
<keyword id="KW-0143">Chaperone</keyword>
<keyword id="KW-0156">Chromatin regulator</keyword>
<keyword id="KW-0539">Nucleus</keyword>
<keyword id="KW-1185">Reference proteome</keyword>
<keyword id="KW-0804">Transcription</keyword>
<keyword id="KW-0805">Transcription regulation</keyword>
<accession>Q4PBU8</accession>
<accession>A0A0D1E1S4</accession>
<comment type="function">
    <text evidence="1">Histone chaperone that facilitates histone deposition and histone exchange and removal during nucleosome assembly and disassembly.</text>
</comment>
<comment type="subunit">
    <text evidence="1">Interacts with histone H3 and histone H4.</text>
</comment>
<comment type="subcellular location">
    <subcellularLocation>
        <location evidence="1">Nucleus</location>
    </subcellularLocation>
</comment>
<comment type="similarity">
    <text evidence="3">Belongs to the ASF1 family.</text>
</comment>